<comment type="function">
    <text evidence="1">Core subunit of the mitochondrial membrane respiratory chain NADH dehydrogenase (Complex I) that is believed to belong to the minimal assembly required for catalysis. Complex I functions in the transfer of electrons from NADH to the respiratory chain. The immediate electron acceptor for the enzyme is believed to be ubiquinone (By similarity).</text>
</comment>
<comment type="catalytic activity">
    <reaction>
        <text>a ubiquinone + NADH + 5 H(+)(in) = a ubiquinol + NAD(+) + 4 H(+)(out)</text>
        <dbReference type="Rhea" id="RHEA:29091"/>
        <dbReference type="Rhea" id="RHEA-COMP:9565"/>
        <dbReference type="Rhea" id="RHEA-COMP:9566"/>
        <dbReference type="ChEBI" id="CHEBI:15378"/>
        <dbReference type="ChEBI" id="CHEBI:16389"/>
        <dbReference type="ChEBI" id="CHEBI:17976"/>
        <dbReference type="ChEBI" id="CHEBI:57540"/>
        <dbReference type="ChEBI" id="CHEBI:57945"/>
        <dbReference type="EC" id="7.1.1.2"/>
    </reaction>
</comment>
<comment type="subcellular location">
    <subcellularLocation>
        <location evidence="1">Mitochondrion membrane</location>
        <topology evidence="1">Multi-pass membrane protein</topology>
    </subcellularLocation>
</comment>
<comment type="similarity">
    <text evidence="3">Belongs to the complex I subunit 3 family.</text>
</comment>
<geneLocation type="mitochondrion"/>
<keyword id="KW-0249">Electron transport</keyword>
<keyword id="KW-0472">Membrane</keyword>
<keyword id="KW-0496">Mitochondrion</keyword>
<keyword id="KW-0520">NAD</keyword>
<keyword id="KW-1185">Reference proteome</keyword>
<keyword id="KW-0679">Respiratory chain</keyword>
<keyword id="KW-1278">Translocase</keyword>
<keyword id="KW-0812">Transmembrane</keyword>
<keyword id="KW-1133">Transmembrane helix</keyword>
<keyword id="KW-0813">Transport</keyword>
<keyword id="KW-0830">Ubiquinone</keyword>
<organism>
    <name type="scientific">Xenopus laevis</name>
    <name type="common">African clawed frog</name>
    <dbReference type="NCBI Taxonomy" id="8355"/>
    <lineage>
        <taxon>Eukaryota</taxon>
        <taxon>Metazoa</taxon>
        <taxon>Chordata</taxon>
        <taxon>Craniata</taxon>
        <taxon>Vertebrata</taxon>
        <taxon>Euteleostomi</taxon>
        <taxon>Amphibia</taxon>
        <taxon>Batrachia</taxon>
        <taxon>Anura</taxon>
        <taxon>Pipoidea</taxon>
        <taxon>Pipidae</taxon>
        <taxon>Xenopodinae</taxon>
        <taxon>Xenopus</taxon>
        <taxon>Xenopus</taxon>
    </lineage>
</organism>
<reference key="1">
    <citation type="journal article" date="1985" name="J. Biol. Chem.">
        <title>The complete nucleotide sequence of the Xenopus laevis mitochondrial genome.</title>
        <authorList>
            <person name="Roe B.A."/>
            <person name="Ma D.-P."/>
            <person name="Wilson R.K."/>
            <person name="Wong J.F.-H."/>
        </authorList>
    </citation>
    <scope>NUCLEOTIDE SEQUENCE [GENOMIC DNA]</scope>
</reference>
<accession>P03900</accession>
<feature type="chain" id="PRO_0000117840" description="NADH-ubiquinone oxidoreductase chain 3">
    <location>
        <begin position="1"/>
        <end position="114"/>
    </location>
</feature>
<feature type="transmembrane region" description="Helical" evidence="2">
    <location>
        <begin position="3"/>
        <end position="23"/>
    </location>
</feature>
<feature type="transmembrane region" description="Helical" evidence="2">
    <location>
        <begin position="54"/>
        <end position="74"/>
    </location>
</feature>
<feature type="transmembrane region" description="Helical" evidence="2">
    <location>
        <begin position="85"/>
        <end position="105"/>
    </location>
</feature>
<sequence>MTATILMIAMTLSTILAILSFWLPQMTPDMEKLSPYECGFDPLGSMRLPFSMRFFLIAILFLLFDLEIALLLPFPWAAQLNTPSIVILWAALILTLLTLGLIYEWLQGGLEWAE</sequence>
<gene>
    <name type="primary">mt-nd3</name>
    <name type="synonym">mtnd3</name>
    <name type="synonym">nadh3</name>
    <name type="synonym">nd3</name>
</gene>
<protein>
    <recommendedName>
        <fullName>NADH-ubiquinone oxidoreductase chain 3</fullName>
        <ecNumber>7.1.1.2</ecNumber>
    </recommendedName>
    <alternativeName>
        <fullName>NADH dehydrogenase subunit 3</fullName>
    </alternativeName>
</protein>
<evidence type="ECO:0000250" key="1"/>
<evidence type="ECO:0000255" key="2"/>
<evidence type="ECO:0000305" key="3"/>
<proteinExistence type="inferred from homology"/>
<name>NU3M_XENLA</name>
<dbReference type="EC" id="7.1.1.2"/>
<dbReference type="EMBL" id="M10217">
    <property type="protein sequence ID" value="AAA66465.1"/>
    <property type="molecule type" value="Genomic_DNA"/>
</dbReference>
<dbReference type="PIR" id="A00425">
    <property type="entry name" value="QXXL3M"/>
</dbReference>
<dbReference type="RefSeq" id="NP_008141.1">
    <property type="nucleotide sequence ID" value="NC_001573.1"/>
</dbReference>
<dbReference type="SMR" id="P03900"/>
<dbReference type="GeneID" id="2642085"/>
<dbReference type="KEGG" id="xla:2642085"/>
<dbReference type="CTD" id="4537"/>
<dbReference type="OrthoDB" id="154075at2759"/>
<dbReference type="Proteomes" id="UP000186698">
    <property type="component" value="Mitochondrion MT"/>
</dbReference>
<dbReference type="Bgee" id="2642085">
    <property type="expression patterns" value="Expressed in blastula and 19 other cell types or tissues"/>
</dbReference>
<dbReference type="GO" id="GO:0031966">
    <property type="term" value="C:mitochondrial membrane"/>
    <property type="evidence" value="ECO:0007669"/>
    <property type="project" value="UniProtKB-SubCell"/>
</dbReference>
<dbReference type="GO" id="GO:0045271">
    <property type="term" value="C:respiratory chain complex I"/>
    <property type="evidence" value="ECO:0000318"/>
    <property type="project" value="GO_Central"/>
</dbReference>
<dbReference type="GO" id="GO:0008137">
    <property type="term" value="F:NADH dehydrogenase (ubiquinone) activity"/>
    <property type="evidence" value="ECO:0000318"/>
    <property type="project" value="GO_Central"/>
</dbReference>
<dbReference type="FunFam" id="1.20.58.1610:FF:000004">
    <property type="entry name" value="NADH-quinone oxidoreductase subunit A"/>
    <property type="match status" value="1"/>
</dbReference>
<dbReference type="Gene3D" id="1.20.58.1610">
    <property type="entry name" value="NADH:ubiquinone/plastoquinone oxidoreductase, chain 3"/>
    <property type="match status" value="1"/>
</dbReference>
<dbReference type="InterPro" id="IPR000440">
    <property type="entry name" value="NADH_UbQ/plastoQ_OxRdtase_su3"/>
</dbReference>
<dbReference type="InterPro" id="IPR038430">
    <property type="entry name" value="NDAH_ubi_oxred_su3_sf"/>
</dbReference>
<dbReference type="PANTHER" id="PTHR11058">
    <property type="entry name" value="NADH-UBIQUINONE OXIDOREDUCTASE CHAIN 3"/>
    <property type="match status" value="1"/>
</dbReference>
<dbReference type="PANTHER" id="PTHR11058:SF9">
    <property type="entry name" value="NADH-UBIQUINONE OXIDOREDUCTASE CHAIN 3"/>
    <property type="match status" value="1"/>
</dbReference>
<dbReference type="Pfam" id="PF00507">
    <property type="entry name" value="Oxidored_q4"/>
    <property type="match status" value="1"/>
</dbReference>